<evidence type="ECO:0000255" key="1">
    <source>
        <dbReference type="HAMAP-Rule" id="MF_01269"/>
    </source>
</evidence>
<dbReference type="EC" id="2.7.1.71" evidence="1"/>
<dbReference type="EMBL" id="CP000802">
    <property type="protein sequence ID" value="ABV04842.1"/>
    <property type="molecule type" value="Genomic_DNA"/>
</dbReference>
<dbReference type="RefSeq" id="WP_000193393.1">
    <property type="nucleotide sequence ID" value="NC_009800.1"/>
</dbReference>
<dbReference type="SMR" id="A7ZX38"/>
<dbReference type="GeneID" id="93777073"/>
<dbReference type="KEGG" id="ecx:EcHS_A0456"/>
<dbReference type="HOGENOM" id="CLU_057607_4_3_6"/>
<dbReference type="UniPathway" id="UPA00053">
    <property type="reaction ID" value="UER00088"/>
</dbReference>
<dbReference type="GO" id="GO:0005829">
    <property type="term" value="C:cytosol"/>
    <property type="evidence" value="ECO:0007669"/>
    <property type="project" value="TreeGrafter"/>
</dbReference>
<dbReference type="GO" id="GO:0005524">
    <property type="term" value="F:ATP binding"/>
    <property type="evidence" value="ECO:0007669"/>
    <property type="project" value="UniProtKB-UniRule"/>
</dbReference>
<dbReference type="GO" id="GO:0000287">
    <property type="term" value="F:magnesium ion binding"/>
    <property type="evidence" value="ECO:0007669"/>
    <property type="project" value="UniProtKB-UniRule"/>
</dbReference>
<dbReference type="GO" id="GO:0004765">
    <property type="term" value="F:shikimate kinase activity"/>
    <property type="evidence" value="ECO:0007669"/>
    <property type="project" value="UniProtKB-UniRule"/>
</dbReference>
<dbReference type="GO" id="GO:0008652">
    <property type="term" value="P:amino acid biosynthetic process"/>
    <property type="evidence" value="ECO:0007669"/>
    <property type="project" value="UniProtKB-KW"/>
</dbReference>
<dbReference type="GO" id="GO:0009073">
    <property type="term" value="P:aromatic amino acid family biosynthetic process"/>
    <property type="evidence" value="ECO:0007669"/>
    <property type="project" value="UniProtKB-KW"/>
</dbReference>
<dbReference type="GO" id="GO:0009423">
    <property type="term" value="P:chorismate biosynthetic process"/>
    <property type="evidence" value="ECO:0007669"/>
    <property type="project" value="UniProtKB-UniRule"/>
</dbReference>
<dbReference type="CDD" id="cd00464">
    <property type="entry name" value="SK"/>
    <property type="match status" value="1"/>
</dbReference>
<dbReference type="FunFam" id="3.40.50.300:FF:000408">
    <property type="entry name" value="Shikimate kinase 2"/>
    <property type="match status" value="1"/>
</dbReference>
<dbReference type="Gene3D" id="3.40.50.300">
    <property type="entry name" value="P-loop containing nucleotide triphosphate hydrolases"/>
    <property type="match status" value="1"/>
</dbReference>
<dbReference type="HAMAP" id="MF_00109">
    <property type="entry name" value="Shikimate_kinase"/>
    <property type="match status" value="1"/>
</dbReference>
<dbReference type="HAMAP" id="MF_01269">
    <property type="entry name" value="Shikimate_kinase_2"/>
    <property type="match status" value="1"/>
</dbReference>
<dbReference type="InterPro" id="IPR027417">
    <property type="entry name" value="P-loop_NTPase"/>
</dbReference>
<dbReference type="InterPro" id="IPR031322">
    <property type="entry name" value="Shikimate/glucono_kinase"/>
</dbReference>
<dbReference type="InterPro" id="IPR000623">
    <property type="entry name" value="Shikimate_kinase/TSH1"/>
</dbReference>
<dbReference type="InterPro" id="IPR027544">
    <property type="entry name" value="Shikimate_kinase_2"/>
</dbReference>
<dbReference type="InterPro" id="IPR023000">
    <property type="entry name" value="Shikimate_kinase_CS"/>
</dbReference>
<dbReference type="NCBIfam" id="NF002988">
    <property type="entry name" value="PRK03731.1"/>
    <property type="match status" value="1"/>
</dbReference>
<dbReference type="PANTHER" id="PTHR21087">
    <property type="entry name" value="SHIKIMATE KINASE"/>
    <property type="match status" value="1"/>
</dbReference>
<dbReference type="PANTHER" id="PTHR21087:SF21">
    <property type="entry name" value="SHIKIMATE KINASE 2"/>
    <property type="match status" value="1"/>
</dbReference>
<dbReference type="Pfam" id="PF01202">
    <property type="entry name" value="SKI"/>
    <property type="match status" value="1"/>
</dbReference>
<dbReference type="PRINTS" id="PR01100">
    <property type="entry name" value="SHIKIMTKNASE"/>
</dbReference>
<dbReference type="SUPFAM" id="SSF52540">
    <property type="entry name" value="P-loop containing nucleoside triphosphate hydrolases"/>
    <property type="match status" value="1"/>
</dbReference>
<dbReference type="PROSITE" id="PS01128">
    <property type="entry name" value="SHIKIMATE_KINASE"/>
    <property type="match status" value="1"/>
</dbReference>
<protein>
    <recommendedName>
        <fullName evidence="1">Shikimate kinase 2</fullName>
        <shortName evidence="1">SK 2</shortName>
        <ecNumber evidence="1">2.7.1.71</ecNumber>
    </recommendedName>
</protein>
<organism>
    <name type="scientific">Escherichia coli O9:H4 (strain HS)</name>
    <dbReference type="NCBI Taxonomy" id="331112"/>
    <lineage>
        <taxon>Bacteria</taxon>
        <taxon>Pseudomonadati</taxon>
        <taxon>Pseudomonadota</taxon>
        <taxon>Gammaproteobacteria</taxon>
        <taxon>Enterobacterales</taxon>
        <taxon>Enterobacteriaceae</taxon>
        <taxon>Escherichia</taxon>
    </lineage>
</organism>
<keyword id="KW-0028">Amino-acid biosynthesis</keyword>
<keyword id="KW-0057">Aromatic amino acid biosynthesis</keyword>
<keyword id="KW-0067">ATP-binding</keyword>
<keyword id="KW-0963">Cytoplasm</keyword>
<keyword id="KW-0418">Kinase</keyword>
<keyword id="KW-0460">Magnesium</keyword>
<keyword id="KW-0479">Metal-binding</keyword>
<keyword id="KW-0547">Nucleotide-binding</keyword>
<keyword id="KW-0808">Transferase</keyword>
<proteinExistence type="inferred from homology"/>
<gene>
    <name evidence="1" type="primary">aroL</name>
    <name type="ordered locus">EcHS_A0456</name>
</gene>
<comment type="function">
    <text evidence="1">Catalyzes the specific phosphorylation of the 3-hydroxyl group of shikimic acid using ATP as a cosubstrate.</text>
</comment>
<comment type="catalytic activity">
    <reaction evidence="1">
        <text>shikimate + ATP = 3-phosphoshikimate + ADP + H(+)</text>
        <dbReference type="Rhea" id="RHEA:13121"/>
        <dbReference type="ChEBI" id="CHEBI:15378"/>
        <dbReference type="ChEBI" id="CHEBI:30616"/>
        <dbReference type="ChEBI" id="CHEBI:36208"/>
        <dbReference type="ChEBI" id="CHEBI:145989"/>
        <dbReference type="ChEBI" id="CHEBI:456216"/>
        <dbReference type="EC" id="2.7.1.71"/>
    </reaction>
</comment>
<comment type="cofactor">
    <cofactor evidence="1">
        <name>Mg(2+)</name>
        <dbReference type="ChEBI" id="CHEBI:18420"/>
    </cofactor>
    <text evidence="1">Binds 1 Mg(2+) ion per subunit.</text>
</comment>
<comment type="pathway">
    <text evidence="1">Metabolic intermediate biosynthesis; chorismate biosynthesis; chorismate from D-erythrose 4-phosphate and phosphoenolpyruvate: step 5/7.</text>
</comment>
<comment type="subunit">
    <text evidence="1">Monomer.</text>
</comment>
<comment type="subcellular location">
    <subcellularLocation>
        <location evidence="1">Cytoplasm</location>
    </subcellularLocation>
</comment>
<comment type="domain">
    <text evidence="1">The LID domain closes over the active site upon ATP binding.</text>
</comment>
<comment type="similarity">
    <text evidence="1">Belongs to the shikimate kinase family. AroL subfamily.</text>
</comment>
<name>AROL_ECOHS</name>
<feature type="chain" id="PRO_1000067328" description="Shikimate kinase 2">
    <location>
        <begin position="1"/>
        <end position="174"/>
    </location>
</feature>
<feature type="region of interest" description="LID domain">
    <location>
        <begin position="112"/>
        <end position="126"/>
    </location>
</feature>
<feature type="binding site" evidence="1">
    <location>
        <begin position="12"/>
        <end position="17"/>
    </location>
    <ligand>
        <name>ATP</name>
        <dbReference type="ChEBI" id="CHEBI:30616"/>
    </ligand>
</feature>
<feature type="binding site" evidence="1">
    <location>
        <position position="16"/>
    </location>
    <ligand>
        <name>Mg(2+)</name>
        <dbReference type="ChEBI" id="CHEBI:18420"/>
    </ligand>
</feature>
<feature type="binding site" evidence="1">
    <location>
        <position position="32"/>
    </location>
    <ligand>
        <name>Mg(2+)</name>
        <dbReference type="ChEBI" id="CHEBI:18420"/>
    </ligand>
</feature>
<feature type="binding site" evidence="1">
    <location>
        <position position="34"/>
    </location>
    <ligand>
        <name>substrate</name>
    </ligand>
</feature>
<feature type="binding site" evidence="1">
    <location>
        <position position="58"/>
    </location>
    <ligand>
        <name>substrate</name>
    </ligand>
</feature>
<feature type="binding site" evidence="1">
    <location>
        <position position="79"/>
    </location>
    <ligand>
        <name>substrate</name>
    </ligand>
</feature>
<feature type="binding site" evidence="1">
    <location>
        <position position="120"/>
    </location>
    <ligand>
        <name>ATP</name>
        <dbReference type="ChEBI" id="CHEBI:30616"/>
    </ligand>
</feature>
<feature type="binding site" evidence="1">
    <location>
        <position position="139"/>
    </location>
    <ligand>
        <name>substrate</name>
    </ligand>
</feature>
<sequence length="174" mass="19151">MTQPLFLIGPRGCGKTTVGMALADSLNRRFVDTDQWLQSQLNMTVAEIVEREEWAGFRARETAALEAVTAPSTVIATGGGIILTEFNRHFMQNNGIVVYLCAPVSVLVNRLQAAPEEDLRPTLTGKPLSEEVQEVLEERDALYREVAHIIIDATNEPSQVISEIRSALAQTINC</sequence>
<reference key="1">
    <citation type="journal article" date="2008" name="J. Bacteriol.">
        <title>The pangenome structure of Escherichia coli: comparative genomic analysis of E. coli commensal and pathogenic isolates.</title>
        <authorList>
            <person name="Rasko D.A."/>
            <person name="Rosovitz M.J."/>
            <person name="Myers G.S.A."/>
            <person name="Mongodin E.F."/>
            <person name="Fricke W.F."/>
            <person name="Gajer P."/>
            <person name="Crabtree J."/>
            <person name="Sebaihia M."/>
            <person name="Thomson N.R."/>
            <person name="Chaudhuri R."/>
            <person name="Henderson I.R."/>
            <person name="Sperandio V."/>
            <person name="Ravel J."/>
        </authorList>
    </citation>
    <scope>NUCLEOTIDE SEQUENCE [LARGE SCALE GENOMIC DNA]</scope>
    <source>
        <strain>HS</strain>
    </source>
</reference>
<accession>A7ZX38</accession>